<protein>
    <recommendedName>
        <fullName evidence="1">tRNA modification GTPase MnmE</fullName>
        <ecNumber evidence="1">3.6.-.-</ecNumber>
    </recommendedName>
</protein>
<keyword id="KW-0963">Cytoplasm</keyword>
<keyword id="KW-0342">GTP-binding</keyword>
<keyword id="KW-0378">Hydrolase</keyword>
<keyword id="KW-0460">Magnesium</keyword>
<keyword id="KW-0479">Metal-binding</keyword>
<keyword id="KW-0547">Nucleotide-binding</keyword>
<keyword id="KW-0630">Potassium</keyword>
<keyword id="KW-1185">Reference proteome</keyword>
<keyword id="KW-0819">tRNA processing</keyword>
<feature type="chain" id="PRO_1000048803" description="tRNA modification GTPase MnmE">
    <location>
        <begin position="1"/>
        <end position="458"/>
    </location>
</feature>
<feature type="domain" description="TrmE-type G">
    <location>
        <begin position="220"/>
        <end position="379"/>
    </location>
</feature>
<feature type="binding site" evidence="1">
    <location>
        <position position="22"/>
    </location>
    <ligand>
        <name>(6S)-5-formyl-5,6,7,8-tetrahydrofolate</name>
        <dbReference type="ChEBI" id="CHEBI:57457"/>
    </ligand>
</feature>
<feature type="binding site" evidence="1">
    <location>
        <position position="85"/>
    </location>
    <ligand>
        <name>(6S)-5-formyl-5,6,7,8-tetrahydrofolate</name>
        <dbReference type="ChEBI" id="CHEBI:57457"/>
    </ligand>
</feature>
<feature type="binding site" evidence="1">
    <location>
        <position position="124"/>
    </location>
    <ligand>
        <name>(6S)-5-formyl-5,6,7,8-tetrahydrofolate</name>
        <dbReference type="ChEBI" id="CHEBI:57457"/>
    </ligand>
</feature>
<feature type="binding site" evidence="1">
    <location>
        <begin position="230"/>
        <end position="235"/>
    </location>
    <ligand>
        <name>GTP</name>
        <dbReference type="ChEBI" id="CHEBI:37565"/>
    </ligand>
</feature>
<feature type="binding site" evidence="1">
    <location>
        <position position="230"/>
    </location>
    <ligand>
        <name>K(+)</name>
        <dbReference type="ChEBI" id="CHEBI:29103"/>
    </ligand>
</feature>
<feature type="binding site" evidence="1">
    <location>
        <position position="234"/>
    </location>
    <ligand>
        <name>Mg(2+)</name>
        <dbReference type="ChEBI" id="CHEBI:18420"/>
    </ligand>
</feature>
<feature type="binding site" evidence="1">
    <location>
        <begin position="249"/>
        <end position="255"/>
    </location>
    <ligand>
        <name>GTP</name>
        <dbReference type="ChEBI" id="CHEBI:37565"/>
    </ligand>
</feature>
<feature type="binding site" evidence="1">
    <location>
        <position position="249"/>
    </location>
    <ligand>
        <name>K(+)</name>
        <dbReference type="ChEBI" id="CHEBI:29103"/>
    </ligand>
</feature>
<feature type="binding site" evidence="1">
    <location>
        <position position="251"/>
    </location>
    <ligand>
        <name>K(+)</name>
        <dbReference type="ChEBI" id="CHEBI:29103"/>
    </ligand>
</feature>
<feature type="binding site" evidence="1">
    <location>
        <position position="254"/>
    </location>
    <ligand>
        <name>K(+)</name>
        <dbReference type="ChEBI" id="CHEBI:29103"/>
    </ligand>
</feature>
<feature type="binding site" evidence="1">
    <location>
        <position position="255"/>
    </location>
    <ligand>
        <name>Mg(2+)</name>
        <dbReference type="ChEBI" id="CHEBI:18420"/>
    </ligand>
</feature>
<feature type="binding site" evidence="1">
    <location>
        <begin position="274"/>
        <end position="277"/>
    </location>
    <ligand>
        <name>GTP</name>
        <dbReference type="ChEBI" id="CHEBI:37565"/>
    </ligand>
</feature>
<feature type="binding site" evidence="1">
    <location>
        <position position="458"/>
    </location>
    <ligand>
        <name>(6S)-5-formyl-5,6,7,8-tetrahydrofolate</name>
        <dbReference type="ChEBI" id="CHEBI:57457"/>
    </ligand>
</feature>
<organism>
    <name type="scientific">Shouchella clausii (strain KSM-K16)</name>
    <name type="common">Alkalihalobacillus clausii</name>
    <dbReference type="NCBI Taxonomy" id="66692"/>
    <lineage>
        <taxon>Bacteria</taxon>
        <taxon>Bacillati</taxon>
        <taxon>Bacillota</taxon>
        <taxon>Bacilli</taxon>
        <taxon>Bacillales</taxon>
        <taxon>Bacillaceae</taxon>
        <taxon>Shouchella</taxon>
    </lineage>
</organism>
<dbReference type="EC" id="3.6.-.-" evidence="1"/>
<dbReference type="EMBL" id="AP006627">
    <property type="protein sequence ID" value="BAD66648.1"/>
    <property type="molecule type" value="Genomic_DNA"/>
</dbReference>
<dbReference type="RefSeq" id="WP_011248950.1">
    <property type="nucleotide sequence ID" value="NC_006582.1"/>
</dbReference>
<dbReference type="SMR" id="Q5WAG3"/>
<dbReference type="STRING" id="66692.ABC4117"/>
<dbReference type="KEGG" id="bcl:ABC4117"/>
<dbReference type="eggNOG" id="COG0486">
    <property type="taxonomic scope" value="Bacteria"/>
</dbReference>
<dbReference type="HOGENOM" id="CLU_019624_4_1_9"/>
<dbReference type="OrthoDB" id="9805918at2"/>
<dbReference type="Proteomes" id="UP000001168">
    <property type="component" value="Chromosome"/>
</dbReference>
<dbReference type="GO" id="GO:0005829">
    <property type="term" value="C:cytosol"/>
    <property type="evidence" value="ECO:0007669"/>
    <property type="project" value="TreeGrafter"/>
</dbReference>
<dbReference type="GO" id="GO:0005525">
    <property type="term" value="F:GTP binding"/>
    <property type="evidence" value="ECO:0007669"/>
    <property type="project" value="UniProtKB-UniRule"/>
</dbReference>
<dbReference type="GO" id="GO:0003924">
    <property type="term" value="F:GTPase activity"/>
    <property type="evidence" value="ECO:0007669"/>
    <property type="project" value="UniProtKB-UniRule"/>
</dbReference>
<dbReference type="GO" id="GO:0046872">
    <property type="term" value="F:metal ion binding"/>
    <property type="evidence" value="ECO:0007669"/>
    <property type="project" value="UniProtKB-KW"/>
</dbReference>
<dbReference type="GO" id="GO:0030488">
    <property type="term" value="P:tRNA methylation"/>
    <property type="evidence" value="ECO:0007669"/>
    <property type="project" value="TreeGrafter"/>
</dbReference>
<dbReference type="GO" id="GO:0002098">
    <property type="term" value="P:tRNA wobble uridine modification"/>
    <property type="evidence" value="ECO:0007669"/>
    <property type="project" value="TreeGrafter"/>
</dbReference>
<dbReference type="CDD" id="cd04164">
    <property type="entry name" value="trmE"/>
    <property type="match status" value="1"/>
</dbReference>
<dbReference type="CDD" id="cd14858">
    <property type="entry name" value="TrmE_N"/>
    <property type="match status" value="1"/>
</dbReference>
<dbReference type="FunFam" id="3.30.1360.120:FF:000003">
    <property type="entry name" value="tRNA modification GTPase MnmE"/>
    <property type="match status" value="1"/>
</dbReference>
<dbReference type="FunFam" id="3.40.50.300:FF:000494">
    <property type="entry name" value="tRNA modification GTPase MnmE"/>
    <property type="match status" value="1"/>
</dbReference>
<dbReference type="Gene3D" id="3.40.50.300">
    <property type="entry name" value="P-loop containing nucleotide triphosphate hydrolases"/>
    <property type="match status" value="1"/>
</dbReference>
<dbReference type="Gene3D" id="3.30.1360.120">
    <property type="entry name" value="Probable tRNA modification gtpase trme, domain 1"/>
    <property type="match status" value="1"/>
</dbReference>
<dbReference type="Gene3D" id="1.20.120.430">
    <property type="entry name" value="tRNA modification GTPase MnmE domain 2"/>
    <property type="match status" value="1"/>
</dbReference>
<dbReference type="HAMAP" id="MF_00379">
    <property type="entry name" value="GTPase_MnmE"/>
    <property type="match status" value="1"/>
</dbReference>
<dbReference type="InterPro" id="IPR031168">
    <property type="entry name" value="G_TrmE"/>
</dbReference>
<dbReference type="InterPro" id="IPR006073">
    <property type="entry name" value="GTP-bd"/>
</dbReference>
<dbReference type="InterPro" id="IPR018948">
    <property type="entry name" value="GTP-bd_TrmE_N"/>
</dbReference>
<dbReference type="InterPro" id="IPR004520">
    <property type="entry name" value="GTPase_MnmE"/>
</dbReference>
<dbReference type="InterPro" id="IPR027368">
    <property type="entry name" value="MnmE_dom2"/>
</dbReference>
<dbReference type="InterPro" id="IPR025867">
    <property type="entry name" value="MnmE_helical"/>
</dbReference>
<dbReference type="InterPro" id="IPR027417">
    <property type="entry name" value="P-loop_NTPase"/>
</dbReference>
<dbReference type="InterPro" id="IPR005225">
    <property type="entry name" value="Small_GTP-bd"/>
</dbReference>
<dbReference type="InterPro" id="IPR027266">
    <property type="entry name" value="TrmE/GcvT_dom1"/>
</dbReference>
<dbReference type="NCBIfam" id="TIGR00450">
    <property type="entry name" value="mnmE_trmE_thdF"/>
    <property type="match status" value="1"/>
</dbReference>
<dbReference type="NCBIfam" id="TIGR00231">
    <property type="entry name" value="small_GTP"/>
    <property type="match status" value="1"/>
</dbReference>
<dbReference type="PANTHER" id="PTHR42714">
    <property type="entry name" value="TRNA MODIFICATION GTPASE GTPBP3"/>
    <property type="match status" value="1"/>
</dbReference>
<dbReference type="PANTHER" id="PTHR42714:SF2">
    <property type="entry name" value="TRNA MODIFICATION GTPASE GTPBP3, MITOCHONDRIAL"/>
    <property type="match status" value="1"/>
</dbReference>
<dbReference type="Pfam" id="PF01926">
    <property type="entry name" value="MMR_HSR1"/>
    <property type="match status" value="1"/>
</dbReference>
<dbReference type="Pfam" id="PF12631">
    <property type="entry name" value="MnmE_helical"/>
    <property type="match status" value="1"/>
</dbReference>
<dbReference type="Pfam" id="PF10396">
    <property type="entry name" value="TrmE_N"/>
    <property type="match status" value="1"/>
</dbReference>
<dbReference type="SUPFAM" id="SSF52540">
    <property type="entry name" value="P-loop containing nucleoside triphosphate hydrolases"/>
    <property type="match status" value="1"/>
</dbReference>
<dbReference type="PROSITE" id="PS51709">
    <property type="entry name" value="G_TRME"/>
    <property type="match status" value="1"/>
</dbReference>
<gene>
    <name evidence="1" type="primary">mnmE</name>
    <name evidence="1" type="synonym">trmE</name>
    <name type="ordered locus">ABC4117</name>
</gene>
<name>MNME_SHOC1</name>
<reference key="1">
    <citation type="submission" date="2003-10" db="EMBL/GenBank/DDBJ databases">
        <title>The complete genome sequence of the alkaliphilic Bacillus clausii KSM-K16.</title>
        <authorList>
            <person name="Takaki Y."/>
            <person name="Kageyama Y."/>
            <person name="Shimamura S."/>
            <person name="Suzuki H."/>
            <person name="Nishi S."/>
            <person name="Hatada Y."/>
            <person name="Kawai S."/>
            <person name="Ito S."/>
            <person name="Horikoshi K."/>
        </authorList>
    </citation>
    <scope>NUCLEOTIDE SEQUENCE [LARGE SCALE GENOMIC DNA]</scope>
    <source>
        <strain>KSM-K16</strain>
    </source>
</reference>
<proteinExistence type="inferred from homology"/>
<comment type="function">
    <text evidence="1">Exhibits a very high intrinsic GTPase hydrolysis rate. Involved in the addition of a carboxymethylaminomethyl (cmnm) group at the wobble position (U34) of certain tRNAs, forming tRNA-cmnm(5)s(2)U34.</text>
</comment>
<comment type="cofactor">
    <cofactor evidence="1">
        <name>K(+)</name>
        <dbReference type="ChEBI" id="CHEBI:29103"/>
    </cofactor>
    <text evidence="1">Binds 1 potassium ion per subunit.</text>
</comment>
<comment type="subunit">
    <text evidence="1">Homodimer. Heterotetramer of two MnmE and two MnmG subunits.</text>
</comment>
<comment type="subcellular location">
    <subcellularLocation>
        <location evidence="1">Cytoplasm</location>
    </subcellularLocation>
</comment>
<comment type="similarity">
    <text evidence="1">Belongs to the TRAFAC class TrmE-Era-EngA-EngB-Septin-like GTPase superfamily. TrmE GTPase family.</text>
</comment>
<evidence type="ECO:0000255" key="1">
    <source>
        <dbReference type="HAMAP-Rule" id="MF_00379"/>
    </source>
</evidence>
<accession>Q5WAG3</accession>
<sequence length="458" mass="50005">MEMDTIAAISTALGEGAIGIVRLSGDQAIAIGDKLFKGTKRLEDTPSHTIVYGHLMDDASEEAIEEAMVTVMRAPRTYTREDIVEINCHGGLVSVNRVLQAVLAKGARLAEPGEFTKRAFLNGRIDLSQAEGVIDLIRSKTDRAMNVALRQVEGRLSKKIGKLRQALLETIASIEVNIDYPEYDAETMTAKLINEKMTIVLAEIEALLATAKQGKVLREGLATAIIGRPNVGKSSLMNSLVHEAKAIVTDIPGTTRDTLEEYVNVRGVPLRLIDTAGIRETEDIVERIGVERSRQALKEADLILLVLNYAEKLSKEDEALFEAVKGLDVVVIVNKIDQTGRIDMERVRQLAGENPVVATSFLQEEGVDQLEEAISRLFFAGGVEGADLTYVSNARHIGLLNQAKAHAEEAIAASLTDVPVDLIQIDVTRTWELLGEIIGEDVQDSLIDQLFSQFCLGK</sequence>